<dbReference type="EC" id="4.3.3.7" evidence="1"/>
<dbReference type="EMBL" id="AL123456">
    <property type="protein sequence ID" value="CCP45552.1"/>
    <property type="molecule type" value="Genomic_DNA"/>
</dbReference>
<dbReference type="PIR" id="H70879">
    <property type="entry name" value="H70879"/>
</dbReference>
<dbReference type="RefSeq" id="NP_217269.1">
    <property type="nucleotide sequence ID" value="NC_000962.3"/>
</dbReference>
<dbReference type="RefSeq" id="WP_003900564.1">
    <property type="nucleotide sequence ID" value="NZ_NVQJ01000020.1"/>
</dbReference>
<dbReference type="PDB" id="1XXX">
    <property type="method" value="X-ray"/>
    <property type="resolution" value="2.28 A"/>
    <property type="chains" value="A/B/C/D/E/F/G/H=2-300"/>
</dbReference>
<dbReference type="PDB" id="3L21">
    <property type="method" value="X-ray"/>
    <property type="resolution" value="2.10 A"/>
    <property type="chains" value="A/B/C/D/E/F=2-300"/>
</dbReference>
<dbReference type="PDB" id="5J5D">
    <property type="method" value="X-ray"/>
    <property type="resolution" value="2.40 A"/>
    <property type="chains" value="A=1-300"/>
</dbReference>
<dbReference type="PDBsum" id="1XXX"/>
<dbReference type="PDBsum" id="3L21"/>
<dbReference type="PDBsum" id="5J5D"/>
<dbReference type="SMR" id="P9WP25"/>
<dbReference type="FunCoup" id="P9WP25">
    <property type="interactions" value="294"/>
</dbReference>
<dbReference type="STRING" id="83332.Rv2753c"/>
<dbReference type="ChEMBL" id="CHEMBL6063"/>
<dbReference type="PaxDb" id="83332-Rv2753c"/>
<dbReference type="DNASU" id="888289"/>
<dbReference type="GeneID" id="45426740"/>
<dbReference type="GeneID" id="888289"/>
<dbReference type="KEGG" id="mtu:Rv2753c"/>
<dbReference type="KEGG" id="mtv:RVBD_2753c"/>
<dbReference type="TubercuList" id="Rv2753c"/>
<dbReference type="eggNOG" id="COG0329">
    <property type="taxonomic scope" value="Bacteria"/>
</dbReference>
<dbReference type="InParanoid" id="P9WP25"/>
<dbReference type="OrthoDB" id="9782828at2"/>
<dbReference type="PhylomeDB" id="P9WP25"/>
<dbReference type="BRENDA" id="4.3.3.7">
    <property type="organism ID" value="3445"/>
</dbReference>
<dbReference type="UniPathway" id="UPA00034">
    <property type="reaction ID" value="UER00017"/>
</dbReference>
<dbReference type="EvolutionaryTrace" id="P9WP25"/>
<dbReference type="PRO" id="PR:P9WP25"/>
<dbReference type="Proteomes" id="UP000001584">
    <property type="component" value="Chromosome"/>
</dbReference>
<dbReference type="GO" id="GO:0005829">
    <property type="term" value="C:cytosol"/>
    <property type="evidence" value="ECO:0000318"/>
    <property type="project" value="GO_Central"/>
</dbReference>
<dbReference type="GO" id="GO:0005886">
    <property type="term" value="C:plasma membrane"/>
    <property type="evidence" value="ECO:0007005"/>
    <property type="project" value="MTBBASE"/>
</dbReference>
<dbReference type="GO" id="GO:0008840">
    <property type="term" value="F:4-hydroxy-tetrahydrodipicolinate synthase activity"/>
    <property type="evidence" value="ECO:0000314"/>
    <property type="project" value="MTBBASE"/>
</dbReference>
<dbReference type="GO" id="GO:0019877">
    <property type="term" value="P:diaminopimelate biosynthetic process"/>
    <property type="evidence" value="ECO:0007669"/>
    <property type="project" value="UniProtKB-UniRule"/>
</dbReference>
<dbReference type="GO" id="GO:0009089">
    <property type="term" value="P:lysine biosynthetic process via diaminopimelate"/>
    <property type="evidence" value="ECO:0000314"/>
    <property type="project" value="MTBBASE"/>
</dbReference>
<dbReference type="CDD" id="cd00950">
    <property type="entry name" value="DHDPS"/>
    <property type="match status" value="1"/>
</dbReference>
<dbReference type="FunFam" id="3.20.20.70:FF:000273">
    <property type="entry name" value="4-hydroxy-tetrahydrodipicolinate synthase"/>
    <property type="match status" value="1"/>
</dbReference>
<dbReference type="Gene3D" id="3.20.20.70">
    <property type="entry name" value="Aldolase class I"/>
    <property type="match status" value="1"/>
</dbReference>
<dbReference type="HAMAP" id="MF_00418">
    <property type="entry name" value="DapA"/>
    <property type="match status" value="1"/>
</dbReference>
<dbReference type="InterPro" id="IPR013785">
    <property type="entry name" value="Aldolase_TIM"/>
</dbReference>
<dbReference type="InterPro" id="IPR005263">
    <property type="entry name" value="DapA"/>
</dbReference>
<dbReference type="InterPro" id="IPR002220">
    <property type="entry name" value="DapA-like"/>
</dbReference>
<dbReference type="InterPro" id="IPR020625">
    <property type="entry name" value="Schiff_base-form_aldolases_AS"/>
</dbReference>
<dbReference type="InterPro" id="IPR020624">
    <property type="entry name" value="Schiff_base-form_aldolases_CS"/>
</dbReference>
<dbReference type="NCBIfam" id="TIGR00674">
    <property type="entry name" value="dapA"/>
    <property type="match status" value="1"/>
</dbReference>
<dbReference type="PANTHER" id="PTHR12128:SF66">
    <property type="entry name" value="4-HYDROXY-2-OXOGLUTARATE ALDOLASE, MITOCHONDRIAL"/>
    <property type="match status" value="1"/>
</dbReference>
<dbReference type="PANTHER" id="PTHR12128">
    <property type="entry name" value="DIHYDRODIPICOLINATE SYNTHASE"/>
    <property type="match status" value="1"/>
</dbReference>
<dbReference type="Pfam" id="PF00701">
    <property type="entry name" value="DHDPS"/>
    <property type="match status" value="1"/>
</dbReference>
<dbReference type="PIRSF" id="PIRSF001365">
    <property type="entry name" value="DHDPS"/>
    <property type="match status" value="1"/>
</dbReference>
<dbReference type="PRINTS" id="PR00146">
    <property type="entry name" value="DHPICSNTHASE"/>
</dbReference>
<dbReference type="SMART" id="SM01130">
    <property type="entry name" value="DHDPS"/>
    <property type="match status" value="1"/>
</dbReference>
<dbReference type="SUPFAM" id="SSF51569">
    <property type="entry name" value="Aldolase"/>
    <property type="match status" value="1"/>
</dbReference>
<dbReference type="PROSITE" id="PS00665">
    <property type="entry name" value="DHDPS_1"/>
    <property type="match status" value="1"/>
</dbReference>
<dbReference type="PROSITE" id="PS00666">
    <property type="entry name" value="DHDPS_2"/>
    <property type="match status" value="1"/>
</dbReference>
<sequence>MTTVGFDVAARLGTLLTAMVTPFSGDGSLDTATAARLANHLVDQGCDGLVVSGTTGESPTTTDGEKIELLRAVLEAVGDRARVIAGAGTYDTAHSIRLAKACAAEGAHGLLVVTPYYSKPPQRGLQAHFTAVADATELPMLLYDIPGRSAVPIEPDTIRALASHPNIVGVKDAKADLHSGAQIMADTGLAYYSGDDALNLPWLAMGATGFISVIAHLAAGQLRELLSAFGSGDIATARKINIAVAPLCNAMSRLGGVTLSKAGLRLQGIDVGDPRLPQVAATPEQIDALAADMRAASVLR</sequence>
<organism>
    <name type="scientific">Mycobacterium tuberculosis (strain ATCC 25618 / H37Rv)</name>
    <dbReference type="NCBI Taxonomy" id="83332"/>
    <lineage>
        <taxon>Bacteria</taxon>
        <taxon>Bacillati</taxon>
        <taxon>Actinomycetota</taxon>
        <taxon>Actinomycetes</taxon>
        <taxon>Mycobacteriales</taxon>
        <taxon>Mycobacteriaceae</taxon>
        <taxon>Mycobacterium</taxon>
        <taxon>Mycobacterium tuberculosis complex</taxon>
    </lineage>
</organism>
<reference key="1">
    <citation type="journal article" date="1998" name="Nature">
        <title>Deciphering the biology of Mycobacterium tuberculosis from the complete genome sequence.</title>
        <authorList>
            <person name="Cole S.T."/>
            <person name="Brosch R."/>
            <person name="Parkhill J."/>
            <person name="Garnier T."/>
            <person name="Churcher C.M."/>
            <person name="Harris D.E."/>
            <person name="Gordon S.V."/>
            <person name="Eiglmeier K."/>
            <person name="Gas S."/>
            <person name="Barry C.E. III"/>
            <person name="Tekaia F."/>
            <person name="Badcock K."/>
            <person name="Basham D."/>
            <person name="Brown D."/>
            <person name="Chillingworth T."/>
            <person name="Connor R."/>
            <person name="Davies R.M."/>
            <person name="Devlin K."/>
            <person name="Feltwell T."/>
            <person name="Gentles S."/>
            <person name="Hamlin N."/>
            <person name="Holroyd S."/>
            <person name="Hornsby T."/>
            <person name="Jagels K."/>
            <person name="Krogh A."/>
            <person name="McLean J."/>
            <person name="Moule S."/>
            <person name="Murphy L.D."/>
            <person name="Oliver S."/>
            <person name="Osborne J."/>
            <person name="Quail M.A."/>
            <person name="Rajandream M.A."/>
            <person name="Rogers J."/>
            <person name="Rutter S."/>
            <person name="Seeger K."/>
            <person name="Skelton S."/>
            <person name="Squares S."/>
            <person name="Squares R."/>
            <person name="Sulston J.E."/>
            <person name="Taylor K."/>
            <person name="Whitehead S."/>
            <person name="Barrell B.G."/>
        </authorList>
    </citation>
    <scope>NUCLEOTIDE SEQUENCE [LARGE SCALE GENOMIC DNA]</scope>
    <source>
        <strain>ATCC 25618 / H37Rv</strain>
    </source>
</reference>
<reference key="2">
    <citation type="journal article" date="2008" name="BMC Syst. Biol.">
        <title>targetTB: a target identification pipeline for Mycobacterium tuberculosis through an interactome, reactome and genome-scale structural analysis.</title>
        <authorList>
            <person name="Raman K."/>
            <person name="Yeturu K."/>
            <person name="Chandra N."/>
        </authorList>
    </citation>
    <scope>IDENTIFICATION AS A DRUG TARGET [LARGE SCALE ANALYSIS]</scope>
</reference>
<reference key="3">
    <citation type="journal article" date="2006" name="Acta Crystallogr. F">
        <title>Cloning, expression, purification, crystallization and preliminary X-ray diffraction analysis of DapA (Rv2753c) from Mycobacterium tuberculosis.</title>
        <authorList>
            <person name="Kefala G."/>
            <person name="Weiss M.S."/>
        </authorList>
    </citation>
    <scope>CRYSTALLIZATION</scope>
    <scope>SUBUNIT</scope>
    <source>
        <strain>ATCC 25618 / H37Rv</strain>
    </source>
</reference>
<reference key="4">
    <citation type="journal article" date="2011" name="Mol. Cell. Proteomics">
        <title>Proteogenomic analysis of Mycobacterium tuberculosis by high resolution mass spectrometry.</title>
        <authorList>
            <person name="Kelkar D.S."/>
            <person name="Kumar D."/>
            <person name="Kumar P."/>
            <person name="Balakrishnan L."/>
            <person name="Muthusamy B."/>
            <person name="Yadav A.K."/>
            <person name="Shrivastava P."/>
            <person name="Marimuthu A."/>
            <person name="Anand S."/>
            <person name="Sundaram H."/>
            <person name="Kingsbury R."/>
            <person name="Harsha H.C."/>
            <person name="Nair B."/>
            <person name="Prasad T.S."/>
            <person name="Chauhan D.S."/>
            <person name="Katoch K."/>
            <person name="Katoch V.M."/>
            <person name="Kumar P."/>
            <person name="Chaerkady R."/>
            <person name="Ramachandran S."/>
            <person name="Dash D."/>
            <person name="Pandey A."/>
        </authorList>
    </citation>
    <scope>IDENTIFICATION BY MASS SPECTROMETRY [LARGE SCALE ANALYSIS]</scope>
    <source>
        <strain>ATCC 25618 / H37Rv</strain>
    </source>
</reference>
<reference key="5">
    <citation type="journal article" date="2008" name="Biochem. J.">
        <title>Crystal structure and kinetic study of dihydrodipicolinate synthase from Mycobacterium tuberculosis.</title>
        <authorList>
            <person name="Kefala G."/>
            <person name="Evans G.L."/>
            <person name="Griffin M.D."/>
            <person name="Devenish S.R."/>
            <person name="Pearce F.G."/>
            <person name="Perugini M.A."/>
            <person name="Gerrard J.A."/>
            <person name="Weiss M.S."/>
            <person name="Dobson R.C."/>
        </authorList>
    </citation>
    <scope>X-RAY CRYSTALLOGRAPHY (2.28 ANGSTROMS) OF 2-300</scope>
    <scope>FUNCTION</scope>
    <scope>KINETIC PARAMETERS</scope>
    <scope>ACTIVITY REGULATION</scope>
    <scope>SUBUNIT</scope>
    <source>
        <strain>ATCC 25618 / H37Rv</strain>
    </source>
</reference>
<reference key="6">
    <citation type="journal article" date="2011" name="Arch. Biochem. Biophys.">
        <title>A tetrameric structure is not essential for activity in dihydrodipicolinate synthase (DHDPS) from Mycobacterium tuberculosis.</title>
        <authorList>
            <person name="Evans G."/>
            <person name="Schuldt L."/>
            <person name="Griffin M.D."/>
            <person name="Devenish S.R."/>
            <person name="Grant Pearce F."/>
            <person name="Perugini M.A."/>
            <person name="Dobson R.C."/>
            <person name="Jameson G.B."/>
            <person name="Weiss M.S."/>
            <person name="Gerrard J.A."/>
        </authorList>
    </citation>
    <scope>X-RAY CRYSTALLOGRAPHY (2.10 ANGSTROMS) OF 2-300 OF MUTANT ARG-204 IN COMPLEX WITH PYRUVATE</scope>
    <scope>ACTIVE SITE</scope>
    <scope>MUTAGENESIS OF ALA-204</scope>
    <source>
        <strain>ATCC 25618 / H37Rv</strain>
    </source>
</reference>
<accession>P9WP25</accession>
<accession>L0TDG5</accession>
<accession>O33295</accession>
<accession>P63945</accession>
<protein>
    <recommendedName>
        <fullName evidence="1">4-hydroxy-tetrahydrodipicolinate synthase</fullName>
        <shortName evidence="1">HTPA synthase</shortName>
        <ecNumber evidence="1">4.3.3.7</ecNumber>
    </recommendedName>
</protein>
<proteinExistence type="evidence at protein level"/>
<comment type="function">
    <text evidence="6">Catalyzes the condensation of (S)-aspartate-beta-semialdehyde [(S)-ASA] and pyruvate to 4-hydroxy-tetrahydrodipicolinate (HTPA).</text>
</comment>
<comment type="catalytic activity">
    <reaction evidence="1">
        <text>L-aspartate 4-semialdehyde + pyruvate = (2S,4S)-4-hydroxy-2,3,4,5-tetrahydrodipicolinate + H2O + H(+)</text>
        <dbReference type="Rhea" id="RHEA:34171"/>
        <dbReference type="ChEBI" id="CHEBI:15361"/>
        <dbReference type="ChEBI" id="CHEBI:15377"/>
        <dbReference type="ChEBI" id="CHEBI:15378"/>
        <dbReference type="ChEBI" id="CHEBI:67139"/>
        <dbReference type="ChEBI" id="CHEBI:537519"/>
        <dbReference type="EC" id="4.3.3.7"/>
    </reaction>
</comment>
<comment type="activity regulation">
    <text evidence="3">Is insensitive to feedback inhibition by (S)-lysine.</text>
</comment>
<comment type="biophysicochemical properties">
    <kinetics>
        <KM evidence="3">0.17 mM for pyruvate</KM>
        <KM evidence="3">0.43 mM for L-aspartate-4-semialdehyde</KM>
        <Vmax evidence="3">4.42 umol/sec/mg enzyme</Vmax>
        <text>kcat is 138 sec(-1).</text>
    </kinetics>
</comment>
<comment type="pathway">
    <text evidence="1">Amino-acid biosynthesis; L-lysine biosynthesis via DAP pathway; (S)-tetrahydrodipicolinate from L-aspartate: step 3/4.</text>
</comment>
<comment type="subunit">
    <text evidence="2 3 4">Homotetramer.</text>
</comment>
<comment type="subcellular location">
    <subcellularLocation>
        <location evidence="1">Cytoplasm</location>
    </subcellularLocation>
</comment>
<comment type="miscellaneous">
    <text>Was identified as a high-confidence drug target.</text>
</comment>
<comment type="similarity">
    <text evidence="1">Belongs to the DapA family.</text>
</comment>
<comment type="caution">
    <text evidence="5">Was originally thought to be a dihydrodipicolinate synthase (DHDPS), catalyzing the condensation of (S)-aspartate-beta-semialdehyde [(S)-ASA] and pyruvate to dihydrodipicolinate (DHDP). However, it was shown in E.coli that the product of the enzymatic reaction is not dihydrodipicolinate but in fact (4S)-4-hydroxy-2,3,4,5-tetrahydro-(2S)-dipicolinic acid (HTPA), and that the consecutive dehydration reaction leading to DHDP is not spontaneous but catalyzed by DapB.</text>
</comment>
<name>DAPA_MYCTU</name>
<gene>
    <name evidence="1" type="primary">dapA</name>
    <name type="ordered locus">Rv2753c</name>
    <name type="ORF">MTV002.18c</name>
</gene>
<feature type="chain" id="PRO_0000103128" description="4-hydroxy-tetrahydrodipicolinate synthase">
    <location>
        <begin position="1"/>
        <end position="300"/>
    </location>
</feature>
<feature type="active site" description="Proton donor/acceptor" evidence="1">
    <location>
        <position position="143"/>
    </location>
</feature>
<feature type="active site" description="Schiff-base intermediate with substrate" evidence="1 4">
    <location>
        <position position="171"/>
    </location>
</feature>
<feature type="binding site" evidence="1">
    <location>
        <position position="55"/>
    </location>
    <ligand>
        <name>pyruvate</name>
        <dbReference type="ChEBI" id="CHEBI:15361"/>
    </ligand>
</feature>
<feature type="binding site" evidence="1">
    <location>
        <position position="211"/>
    </location>
    <ligand>
        <name>pyruvate</name>
        <dbReference type="ChEBI" id="CHEBI:15361"/>
    </ligand>
</feature>
<feature type="site" description="Part of a proton relay during catalysis" evidence="1">
    <location>
        <position position="54"/>
    </location>
</feature>
<feature type="site" description="Part of a proton relay during catalysis" evidence="1">
    <location>
        <position position="117"/>
    </location>
</feature>
<feature type="mutagenesis site" description="Exists as dimer in solution. Has similar activity to the wild-type enzyme. Slight decrease in affinity for substrates." evidence="4">
    <original>A</original>
    <variation>R</variation>
    <location>
        <position position="204"/>
    </location>
</feature>
<feature type="helix" evidence="7">
    <location>
        <begin position="8"/>
        <end position="12"/>
    </location>
</feature>
<feature type="strand" evidence="7">
    <location>
        <begin position="14"/>
        <end position="18"/>
    </location>
</feature>
<feature type="helix" evidence="7">
    <location>
        <begin position="31"/>
        <end position="43"/>
    </location>
</feature>
<feature type="strand" evidence="7">
    <location>
        <begin position="47"/>
        <end position="53"/>
    </location>
</feature>
<feature type="turn" evidence="7">
    <location>
        <begin position="54"/>
        <end position="57"/>
    </location>
</feature>
<feature type="helix" evidence="7">
    <location>
        <begin position="58"/>
        <end position="60"/>
    </location>
</feature>
<feature type="helix" evidence="7">
    <location>
        <begin position="63"/>
        <end position="77"/>
    </location>
</feature>
<feature type="turn" evidence="7">
    <location>
        <begin position="78"/>
        <end position="80"/>
    </location>
</feature>
<feature type="strand" evidence="7">
    <location>
        <begin position="81"/>
        <end position="86"/>
    </location>
</feature>
<feature type="helix" evidence="7">
    <location>
        <begin position="92"/>
        <end position="105"/>
    </location>
</feature>
<feature type="strand" evidence="7">
    <location>
        <begin position="108"/>
        <end position="113"/>
    </location>
</feature>
<feature type="helix" evidence="7">
    <location>
        <begin position="122"/>
        <end position="133"/>
    </location>
</feature>
<feature type="strand" evidence="7">
    <location>
        <begin position="140"/>
        <end position="144"/>
    </location>
</feature>
<feature type="helix" evidence="7">
    <location>
        <begin position="146"/>
        <end position="149"/>
    </location>
</feature>
<feature type="helix" evidence="7">
    <location>
        <begin position="155"/>
        <end position="162"/>
    </location>
</feature>
<feature type="strand" evidence="7">
    <location>
        <begin position="167"/>
        <end position="172"/>
    </location>
</feature>
<feature type="helix" evidence="7">
    <location>
        <begin position="177"/>
        <end position="187"/>
    </location>
</feature>
<feature type="strand" evidence="7">
    <location>
        <begin position="190"/>
        <end position="195"/>
    </location>
</feature>
<feature type="helix" evidence="7">
    <location>
        <begin position="196"/>
        <end position="198"/>
    </location>
</feature>
<feature type="helix" evidence="7">
    <location>
        <begin position="199"/>
        <end position="205"/>
    </location>
</feature>
<feature type="strand" evidence="7">
    <location>
        <begin position="209"/>
        <end position="213"/>
    </location>
</feature>
<feature type="helix" evidence="7">
    <location>
        <begin position="215"/>
        <end position="231"/>
    </location>
</feature>
<feature type="helix" evidence="7">
    <location>
        <begin position="234"/>
        <end position="243"/>
    </location>
</feature>
<feature type="helix" evidence="7">
    <location>
        <begin position="245"/>
        <end position="266"/>
    </location>
</feature>
<feature type="helix" evidence="7">
    <location>
        <begin position="283"/>
        <end position="295"/>
    </location>
</feature>
<evidence type="ECO:0000255" key="1">
    <source>
        <dbReference type="HAMAP-Rule" id="MF_00418"/>
    </source>
</evidence>
<evidence type="ECO:0000269" key="2">
    <source>
    </source>
</evidence>
<evidence type="ECO:0000269" key="3">
    <source>
    </source>
</evidence>
<evidence type="ECO:0000269" key="4">
    <source>
    </source>
</evidence>
<evidence type="ECO:0000305" key="5"/>
<evidence type="ECO:0000305" key="6">
    <source>
    </source>
</evidence>
<evidence type="ECO:0007829" key="7">
    <source>
        <dbReference type="PDB" id="3L21"/>
    </source>
</evidence>
<keyword id="KW-0002">3D-structure</keyword>
<keyword id="KW-0028">Amino-acid biosynthesis</keyword>
<keyword id="KW-0963">Cytoplasm</keyword>
<keyword id="KW-0220">Diaminopimelate biosynthesis</keyword>
<keyword id="KW-0456">Lyase</keyword>
<keyword id="KW-0457">Lysine biosynthesis</keyword>
<keyword id="KW-1185">Reference proteome</keyword>
<keyword id="KW-0704">Schiff base</keyword>